<name>FIMB_PORGI</name>
<reference evidence="5 6" key="1">
    <citation type="journal article" date="2003" name="J. Bacteriol.">
        <title>Complete genome sequence of the oral pathogenic bacterium Porphyromonas gingivalis strain W83.</title>
        <authorList>
            <person name="Nelson K.E."/>
            <person name="Fleischmann R.D."/>
            <person name="DeBoy R.T."/>
            <person name="Paulsen I.T."/>
            <person name="Fouts D.E."/>
            <person name="Eisen J.A."/>
            <person name="Daugherty S.C."/>
            <person name="Dodson R.J."/>
            <person name="Durkin A.S."/>
            <person name="Gwinn M.L."/>
            <person name="Haft D.H."/>
            <person name="Kolonay J.F."/>
            <person name="Nelson W.C."/>
            <person name="Mason T.M."/>
            <person name="Tallon L."/>
            <person name="Gray J."/>
            <person name="Granger D."/>
            <person name="Tettelin H."/>
            <person name="Dong H."/>
            <person name="Galvin J.L."/>
            <person name="Duncan M.J."/>
            <person name="Dewhirst F.E."/>
            <person name="Fraser C.M."/>
        </authorList>
    </citation>
    <scope>NUCLEOTIDE SEQUENCE [LARGE SCALE GENOMIC DNA]</scope>
    <source>
        <strain evidence="6">ATCC BAA-308 / W83</strain>
    </source>
</reference>
<reference key="2">
    <citation type="journal article" date="2010" name="J. Dent. Res.">
        <title>FimB regulates FimA fimbriation in Porphyromonas gingivalis.</title>
        <authorList>
            <person name="Nagano K."/>
            <person name="Hasegawa Y."/>
            <person name="Murakami Y."/>
            <person name="Nishiyama S."/>
            <person name="Yoshimura F."/>
        </authorList>
    </citation>
    <scope>IDENTIFICATION</scope>
    <scope>SUBCELLULAR LOCATION</scope>
    <scope>FUNCTION</scope>
    <source>
        <strain evidence="3">OMZ314</strain>
    </source>
</reference>
<dbReference type="EMBL" id="AE015924">
    <property type="protein sequence ID" value="AAQ67088.1"/>
    <property type="molecule type" value="Genomic_DNA"/>
</dbReference>
<dbReference type="RefSeq" id="WP_005873477.1">
    <property type="nucleotide sequence ID" value="NC_002950.2"/>
</dbReference>
<dbReference type="SMR" id="Q7MT55"/>
<dbReference type="STRING" id="242619.PG_2133"/>
<dbReference type="EnsemblBacteria" id="AAQ67088">
    <property type="protein sequence ID" value="AAQ67088"/>
    <property type="gene ID" value="PG_2133"/>
</dbReference>
<dbReference type="KEGG" id="pgi:PG_2133"/>
<dbReference type="PATRIC" id="fig|242619.8.peg.1987"/>
<dbReference type="eggNOG" id="ENOG503429A">
    <property type="taxonomic scope" value="Bacteria"/>
</dbReference>
<dbReference type="HOGENOM" id="CLU_078506_0_0_10"/>
<dbReference type="BioCyc" id="PGIN242619:G1G02-2003-MONOMER"/>
<dbReference type="Proteomes" id="UP000000588">
    <property type="component" value="Chromosome"/>
</dbReference>
<dbReference type="GO" id="GO:0009279">
    <property type="term" value="C:cell outer membrane"/>
    <property type="evidence" value="ECO:0007669"/>
    <property type="project" value="UniProtKB-SubCell"/>
</dbReference>
<dbReference type="Gene3D" id="2.60.40.2100">
    <property type="match status" value="1"/>
</dbReference>
<dbReference type="InterPro" id="IPR014941">
    <property type="entry name" value="FimB/Mfa2/Mfa3"/>
</dbReference>
<dbReference type="Pfam" id="PF08842">
    <property type="entry name" value="Mfa2"/>
    <property type="match status" value="1"/>
</dbReference>
<dbReference type="PROSITE" id="PS51257">
    <property type="entry name" value="PROKAR_LIPOPROTEIN"/>
    <property type="match status" value="1"/>
</dbReference>
<keyword id="KW-0998">Cell outer membrane</keyword>
<keyword id="KW-0449">Lipoprotein</keyword>
<keyword id="KW-0472">Membrane</keyword>
<keyword id="KW-0564">Palmitate</keyword>
<keyword id="KW-1185">Reference proteome</keyword>
<keyword id="KW-0732">Signal</keyword>
<evidence type="ECO:0000250" key="1">
    <source>
        <dbReference type="UniProtKB" id="A0PA81"/>
    </source>
</evidence>
<evidence type="ECO:0000255" key="2">
    <source>
        <dbReference type="PROSITE-ProRule" id="PRU00303"/>
    </source>
</evidence>
<evidence type="ECO:0000303" key="3">
    <source>
    </source>
</evidence>
<evidence type="ECO:0000305" key="4"/>
<evidence type="ECO:0000312" key="5">
    <source>
        <dbReference type="EMBL" id="AAQ67088.1"/>
    </source>
</evidence>
<evidence type="ECO:0000312" key="6">
    <source>
        <dbReference type="Proteomes" id="UP000000588"/>
    </source>
</evidence>
<protein>
    <recommendedName>
        <fullName>Major fimbrium anchoring subunit FimB</fullName>
    </recommendedName>
</protein>
<sequence length="303" mass="33839">MNDAKKYIVSVLILLVAGMFGGCIKEDYSDCPRPFRLTVRAWDADMQDITETGAVQRVVIFVFDETGRRIDRLMMDAAQVAARKPIPLEYDGPTTVSFVAWANPDDHMLEETANVQNVKDLFFRLSSTDGIAQSPGDLFSGVLTCPIEYGSIEQGTDQTVDIYRRTAQVHIIIRGYQEWLEANGPRQLPDYADILLGETPDTYTGLAELIGNAVQYRPDGQIQNGDFISPIFRVYPTLDTTPLHLKLYAYGQELLNISTGSDGVPFIPVIGKMLNIYIDLRGANLNVLVSVTPWDVVQQYAEY</sequence>
<proteinExistence type="inferred from homology"/>
<gene>
    <name evidence="4" type="primary">fimB</name>
    <name evidence="5" type="ordered locus">PG_2133</name>
</gene>
<comment type="function">
    <text evidence="1">Anchoring subunit of the major fimbriae. Regulates fimbrial length. These filamentous pili are attached to the cell surface; they mediate biofilm formation, adhesion onto host cells and onto other bacteria that are part of the oral microbiome. Fimbriae of P.gingivalis are major virulence factors.</text>
</comment>
<comment type="subunit">
    <text evidence="1">FimB is not part of the fimbrium itself, but anchors the fimbrium in the outer membrane. Linear, head-to-tail oligomerization of fimbrial subunits mediates assembly of the fimbrium stalk, while the minor components FimC, FimD and FimE probably form the fimbrium tip. The anchoring subunit FimB limits fimbrium length and is important for solid fimbrium attachment to the outer membrane. In its absence, the major fimbriae become very long and are easily detached from the membrane.</text>
</comment>
<comment type="subcellular location">
    <subcellularLocation>
        <location evidence="1">Cell outer membrane</location>
        <topology evidence="1 4">Lipid-anchor</topology>
    </subcellularLocation>
</comment>
<comment type="miscellaneous">
    <text evidence="4">The name (major fimbrium subunit) does not indicate the abundance of the protein, but is derived from the greater length of the major fimbriae. In strain ATCC 33277 and strain ATCC BAA-1703 / FDC 381, major fimbriae are 300 - 1600 nM in length and about 5 nm in diameter. In contrast, minor fimbriae are only about 80 - 120 nm long. This length difference is observed only in a small number of strains, including strain ATCC 33277 and strain ATCC BAA-1703 / FDC 381, and is due to a loss of function mutation in FimB, a protein that restricts fimbrial length in other strains.</text>
</comment>
<comment type="similarity">
    <text evidence="4">Belongs to the bacteroidetes fimbrillin superfamily. FimB/Mfa2 family.</text>
</comment>
<accession>Q7MT55</accession>
<organism evidence="5">
    <name type="scientific">Porphyromonas gingivalis (strain ATCC BAA-308 / W83)</name>
    <dbReference type="NCBI Taxonomy" id="242619"/>
    <lineage>
        <taxon>Bacteria</taxon>
        <taxon>Pseudomonadati</taxon>
        <taxon>Bacteroidota</taxon>
        <taxon>Bacteroidia</taxon>
        <taxon>Bacteroidales</taxon>
        <taxon>Porphyromonadaceae</taxon>
        <taxon>Porphyromonas</taxon>
    </lineage>
</organism>
<feature type="signal peptide" evidence="2">
    <location>
        <begin position="1"/>
        <end position="22"/>
    </location>
</feature>
<feature type="chain" id="PRO_0000436789" description="Major fimbrium anchoring subunit FimB" evidence="2">
    <location>
        <begin position="23"/>
        <end position="303"/>
    </location>
</feature>
<feature type="lipid moiety-binding region" description="N-palmitoyl cysteine" evidence="2">
    <location>
        <position position="23"/>
    </location>
</feature>
<feature type="lipid moiety-binding region" description="S-diacylglycerol cysteine" evidence="2">
    <location>
        <position position="23"/>
    </location>
</feature>